<proteinExistence type="inferred from homology"/>
<reference key="1">
    <citation type="submission" date="2006-12" db="EMBL/GenBank/DDBJ databases">
        <title>Complete sequence of chromosome 1 of Paracoccus denitrificans PD1222.</title>
        <authorList>
            <person name="Copeland A."/>
            <person name="Lucas S."/>
            <person name="Lapidus A."/>
            <person name="Barry K."/>
            <person name="Detter J.C."/>
            <person name="Glavina del Rio T."/>
            <person name="Hammon N."/>
            <person name="Israni S."/>
            <person name="Dalin E."/>
            <person name="Tice H."/>
            <person name="Pitluck S."/>
            <person name="Munk A.C."/>
            <person name="Brettin T."/>
            <person name="Bruce D."/>
            <person name="Han C."/>
            <person name="Tapia R."/>
            <person name="Gilna P."/>
            <person name="Schmutz J."/>
            <person name="Larimer F."/>
            <person name="Land M."/>
            <person name="Hauser L."/>
            <person name="Kyrpides N."/>
            <person name="Lykidis A."/>
            <person name="Spiro S."/>
            <person name="Richardson D.J."/>
            <person name="Moir J.W.B."/>
            <person name="Ferguson S.J."/>
            <person name="van Spanning R.J.M."/>
            <person name="Richardson P."/>
        </authorList>
    </citation>
    <scope>NUCLEOTIDE SEQUENCE [LARGE SCALE GENOMIC DNA]</scope>
    <source>
        <strain>Pd 1222</strain>
    </source>
</reference>
<reference key="2">
    <citation type="journal article" date="1994" name="Antonie Van Leeuwenhoek">
        <title>Isolation, sequencing and mutational analysis of a gene cluster involved in nitrite reduction in Paracoccus denitrificans.</title>
        <authorList>
            <person name="de Boer A.P.N."/>
            <person name="Reijnders W.N.M."/>
            <person name="Kuenen J.G."/>
            <person name="Stouthamer A.H."/>
            <person name="van Spanning R.J.M."/>
        </authorList>
    </citation>
    <scope>NUCLEOTIDE SEQUENCE [GENOMIC DNA] OF 1-214</scope>
</reference>
<name>NIRDL_PARDP</name>
<organism>
    <name type="scientific">Paracoccus denitrificans (strain Pd 1222)</name>
    <dbReference type="NCBI Taxonomy" id="318586"/>
    <lineage>
        <taxon>Bacteria</taxon>
        <taxon>Pseudomonadati</taxon>
        <taxon>Pseudomonadota</taxon>
        <taxon>Alphaproteobacteria</taxon>
        <taxon>Rhodobacterales</taxon>
        <taxon>Paracoccaceae</taxon>
        <taxon>Paracoccus</taxon>
    </lineage>
</organism>
<evidence type="ECO:0000250" key="1">
    <source>
        <dbReference type="UniProtKB" id="I6UH61"/>
    </source>
</evidence>
<evidence type="ECO:0000305" key="2"/>
<comment type="function">
    <text evidence="1">Involved in heme d1 biosynthesis. Catalyzes the decarboxylation of siroheme into didecarboxysiroheme.</text>
</comment>
<comment type="catalytic activity">
    <reaction evidence="1">
        <text>siroheme + 2 H(+) = 12,18-didecarboxysiroheme + 2 CO2</text>
        <dbReference type="Rhea" id="RHEA:19093"/>
        <dbReference type="ChEBI" id="CHEBI:15378"/>
        <dbReference type="ChEBI" id="CHEBI:16526"/>
        <dbReference type="ChEBI" id="CHEBI:60052"/>
        <dbReference type="ChEBI" id="CHEBI:140497"/>
        <dbReference type="EC" id="4.1.1.111"/>
    </reaction>
</comment>
<comment type="pathway">
    <text evidence="1">Porphyrin-containing compound metabolism.</text>
</comment>
<comment type="subunit">
    <text evidence="1">Forms a complex composed of NirDL, NirG and NirH. All proteins are required for the total conversion of siroheme to didecarboxysiroheme.</text>
</comment>
<comment type="similarity">
    <text evidence="2">Belongs to the Ahb/Nir family.</text>
</comment>
<comment type="sequence caution" evidence="2">
    <conflict type="frameshift">
        <sequence resource="EMBL-CDS" id="AAA93122"/>
    </conflict>
</comment>
<comment type="sequence caution" evidence="2">
    <conflict type="erroneous initiation">
        <sequence resource="EMBL-CDS" id="ABL70578"/>
    </conflict>
</comment>
<gene>
    <name evidence="1" type="primary">nirDL</name>
    <name type="ordered locus">Pden_2491</name>
</gene>
<keyword id="KW-0456">Lyase</keyword>
<keyword id="KW-1185">Reference proteome</keyword>
<dbReference type="EC" id="4.1.1.111" evidence="1"/>
<dbReference type="EMBL" id="CP000489">
    <property type="protein sequence ID" value="ABL70578.1"/>
    <property type="status" value="ALT_INIT"/>
    <property type="molecule type" value="Genomic_DNA"/>
</dbReference>
<dbReference type="EMBL" id="U05002">
    <property type="protein sequence ID" value="AAA93122.1"/>
    <property type="status" value="ALT_FRAME"/>
    <property type="molecule type" value="Genomic_DNA"/>
</dbReference>
<dbReference type="SMR" id="Q51703"/>
<dbReference type="STRING" id="318586.Pden_2491"/>
<dbReference type="EnsemblBacteria" id="ABL70578">
    <property type="protein sequence ID" value="ABL70578"/>
    <property type="gene ID" value="Pden_2491"/>
</dbReference>
<dbReference type="KEGG" id="pde:Pden_2491"/>
<dbReference type="eggNOG" id="COG1522">
    <property type="taxonomic scope" value="Bacteria"/>
</dbReference>
<dbReference type="HOGENOM" id="CLU_049427_0_0_5"/>
<dbReference type="OrthoDB" id="9806536at2"/>
<dbReference type="Proteomes" id="UP000000361">
    <property type="component" value="Chromosome 1"/>
</dbReference>
<dbReference type="GO" id="GO:0016829">
    <property type="term" value="F:lyase activity"/>
    <property type="evidence" value="ECO:0007669"/>
    <property type="project" value="UniProtKB-KW"/>
</dbReference>
<dbReference type="Gene3D" id="3.30.70.3460">
    <property type="match status" value="2"/>
</dbReference>
<dbReference type="Gene3D" id="1.10.10.10">
    <property type="entry name" value="Winged helix-like DNA-binding domain superfamily/Winged helix DNA-binding domain"/>
    <property type="match status" value="1"/>
</dbReference>
<dbReference type="InterPro" id="IPR040523">
    <property type="entry name" value="AsnC_trans_reg2"/>
</dbReference>
<dbReference type="InterPro" id="IPR050684">
    <property type="entry name" value="HTH-Siroheme_Decarb"/>
</dbReference>
<dbReference type="InterPro" id="IPR053953">
    <property type="entry name" value="NirdL-like_HTH"/>
</dbReference>
<dbReference type="InterPro" id="IPR036388">
    <property type="entry name" value="WH-like_DNA-bd_sf"/>
</dbReference>
<dbReference type="InterPro" id="IPR036390">
    <property type="entry name" value="WH_DNA-bd_sf"/>
</dbReference>
<dbReference type="PANTHER" id="PTHR43413:SF1">
    <property type="entry name" value="SIROHEME DECARBOXYLASE NIRL SUBUNIT"/>
    <property type="match status" value="1"/>
</dbReference>
<dbReference type="PANTHER" id="PTHR43413">
    <property type="entry name" value="TRANSCRIPTIONAL REGULATOR, ASNC FAMILY"/>
    <property type="match status" value="1"/>
</dbReference>
<dbReference type="Pfam" id="PF17805">
    <property type="entry name" value="AsnC_trans_reg2"/>
    <property type="match status" value="2"/>
</dbReference>
<dbReference type="Pfam" id="PF22451">
    <property type="entry name" value="NirdL-like_HTH"/>
    <property type="match status" value="2"/>
</dbReference>
<dbReference type="SUPFAM" id="SSF46785">
    <property type="entry name" value="Winged helix' DNA-binding domain"/>
    <property type="match status" value="1"/>
</dbReference>
<accession>Q51703</accession>
<accession>A1B4Y4</accession>
<feature type="chain" id="PRO_0000021814" description="Siroheme decarboxylase NirDL subunit">
    <location>
        <begin position="1"/>
        <end position="325"/>
    </location>
</feature>
<feature type="sequence conflict" description="In Ref. 2; AAA93122." evidence="2" ref="2">
    <original>A</original>
    <variation>P</variation>
    <location>
        <position position="194"/>
    </location>
</feature>
<feature type="sequence conflict" description="In Ref. 2; AAA93122." evidence="2" ref="2">
    <original>LAEARI</original>
    <variation>EPRRTS</variation>
    <location>
        <begin position="209"/>
        <end position="214"/>
    </location>
</feature>
<protein>
    <recommendedName>
        <fullName evidence="1">Siroheme decarboxylase NirDL subunit</fullName>
        <ecNumber evidence="1">4.1.1.111</ecNumber>
    </recommendedName>
</protein>
<sequence>MTMDDLDLRLLDGFQRDLPLEPRPFAAMATRLGTGEAEVIARLVRLRDEGIVSRIGATCRPNTAGASTLAALRVPAPRVDEIAALVGAEPGVNHSYLREGDWNLWFVATAPDTAALAESLVRIEAATGLAVLSLPLVRAFNIDLGFPLIGPRRAMALDRPADLDALRPRDKALMQALSSGLALVPRPFVALGQALHRSEAEVISRIRALAEARILTRVGVIVKHRALGWTQNAMVVWRLPEAAVEAAGTALAGVPGVTLCYQRRCVPGLWDWPLFCMIHARSHAEAMEVLAEARALPELQEVPHRILFSTRCFRQRGATIAEVAA</sequence>